<reference key="1">
    <citation type="journal article" date="2004" name="Genome Res.">
        <title>The status, quality, and expansion of the NIH full-length cDNA project: the Mammalian Gene Collection (MGC).</title>
        <authorList>
            <consortium name="The MGC Project Team"/>
        </authorList>
    </citation>
    <scope>NUCLEOTIDE SEQUENCE [LARGE SCALE MRNA]</scope>
    <source>
        <tissue>Prostate</tissue>
        <tissue>Thymus</tissue>
    </source>
</reference>
<reference key="2">
    <citation type="journal article" date="2012" name="J. Neurosci.">
        <title>RAE-1, a novel PHR binding protein, is required for axon termination and synapse formation in Caenorhabditis elegans.</title>
        <authorList>
            <person name="Grill B."/>
            <person name="Chen L."/>
            <person name="Tulgren E.D."/>
            <person name="Baker S.T."/>
            <person name="Bienvenut W."/>
            <person name="Anderson M."/>
            <person name="Quadroni M."/>
            <person name="Jin Y."/>
            <person name="Garner C.C."/>
        </authorList>
    </citation>
    <scope>INTERACTION WITH MYCBP2</scope>
</reference>
<gene>
    <name type="primary">Rae1</name>
    <name type="synonym">Mrnp41</name>
</gene>
<organism>
    <name type="scientific">Rattus norvegicus</name>
    <name type="common">Rat</name>
    <dbReference type="NCBI Taxonomy" id="10116"/>
    <lineage>
        <taxon>Eukaryota</taxon>
        <taxon>Metazoa</taxon>
        <taxon>Chordata</taxon>
        <taxon>Craniata</taxon>
        <taxon>Vertebrata</taxon>
        <taxon>Euteleostomi</taxon>
        <taxon>Mammalia</taxon>
        <taxon>Eutheria</taxon>
        <taxon>Euarchontoglires</taxon>
        <taxon>Glires</taxon>
        <taxon>Rodentia</taxon>
        <taxon>Myomorpha</taxon>
        <taxon>Muroidea</taxon>
        <taxon>Muridae</taxon>
        <taxon>Murinae</taxon>
        <taxon>Rattus</taxon>
    </lineage>
</organism>
<accession>Q3SWS8</accession>
<protein>
    <recommendedName>
        <fullName>mRNA export factor</fullName>
    </recommendedName>
    <alternativeName>
        <fullName>Rae1 protein homolog</fullName>
    </alternativeName>
    <alternativeName>
        <fullName>mRNA-associated protein mrnp 41</fullName>
    </alternativeName>
</protein>
<evidence type="ECO:0000250" key="1">
    <source>
        <dbReference type="UniProtKB" id="P78406"/>
    </source>
</evidence>
<evidence type="ECO:0000256" key="2">
    <source>
        <dbReference type="SAM" id="MobiDB-lite"/>
    </source>
</evidence>
<evidence type="ECO:0000269" key="3">
    <source>
    </source>
</evidence>
<evidence type="ECO:0000305" key="4"/>
<dbReference type="EMBL" id="BC104721">
    <property type="protein sequence ID" value="AAI04722.1"/>
    <property type="molecule type" value="mRNA"/>
</dbReference>
<dbReference type="EMBL" id="BC105758">
    <property type="protein sequence ID" value="AAI05759.1"/>
    <property type="molecule type" value="mRNA"/>
</dbReference>
<dbReference type="RefSeq" id="NP_001028880.1">
    <property type="nucleotide sequence ID" value="NM_001033708.1"/>
</dbReference>
<dbReference type="RefSeq" id="XP_008760741.1">
    <property type="nucleotide sequence ID" value="XM_008762519.2"/>
</dbReference>
<dbReference type="SMR" id="Q3SWS8"/>
<dbReference type="BioGRID" id="263329">
    <property type="interactions" value="1"/>
</dbReference>
<dbReference type="CORUM" id="Q3SWS8"/>
<dbReference type="FunCoup" id="Q3SWS8">
    <property type="interactions" value="4358"/>
</dbReference>
<dbReference type="IntAct" id="Q3SWS8">
    <property type="interactions" value="2"/>
</dbReference>
<dbReference type="STRING" id="10116.ENSRNOP00000029085"/>
<dbReference type="PhosphoSitePlus" id="Q3SWS8"/>
<dbReference type="jPOST" id="Q3SWS8"/>
<dbReference type="PaxDb" id="10116-ENSRNOP00000029085"/>
<dbReference type="Ensembl" id="ENSRNOT00000038182.6">
    <property type="protein sequence ID" value="ENSRNOP00000029085.4"/>
    <property type="gene ID" value="ENSRNOG00000021295.6"/>
</dbReference>
<dbReference type="GeneID" id="362281"/>
<dbReference type="KEGG" id="rno:362281"/>
<dbReference type="UCSC" id="RGD:1311540">
    <property type="organism name" value="rat"/>
</dbReference>
<dbReference type="AGR" id="RGD:1311540"/>
<dbReference type="CTD" id="8480"/>
<dbReference type="RGD" id="1311540">
    <property type="gene designation" value="Rae1"/>
</dbReference>
<dbReference type="eggNOG" id="KOG0647">
    <property type="taxonomic scope" value="Eukaryota"/>
</dbReference>
<dbReference type="GeneTree" id="ENSGT00950000183091"/>
<dbReference type="HOGENOM" id="CLU_038526_1_0_1"/>
<dbReference type="InParanoid" id="Q3SWS8"/>
<dbReference type="OrthoDB" id="256303at2759"/>
<dbReference type="PhylomeDB" id="Q3SWS8"/>
<dbReference type="TreeFam" id="TF105481"/>
<dbReference type="Reactome" id="R-RNO-159227">
    <property type="pathway name" value="Transport of the SLBP independent Mature mRNA"/>
</dbReference>
<dbReference type="Reactome" id="R-RNO-159230">
    <property type="pathway name" value="Transport of the SLBP Dependant Mature mRNA"/>
</dbReference>
<dbReference type="Reactome" id="R-RNO-159231">
    <property type="pathway name" value="Transport of Mature mRNA Derived from an Intronless Transcript"/>
</dbReference>
<dbReference type="Reactome" id="R-RNO-159236">
    <property type="pathway name" value="Transport of Mature mRNA derived from an Intron-Containing Transcript"/>
</dbReference>
<dbReference type="Reactome" id="R-RNO-170822">
    <property type="pathway name" value="Regulation of Glucokinase by Glucokinase Regulatory Protein"/>
</dbReference>
<dbReference type="Reactome" id="R-RNO-191859">
    <property type="pathway name" value="snRNP Assembly"/>
</dbReference>
<dbReference type="Reactome" id="R-RNO-3108214">
    <property type="pathway name" value="SUMOylation of DNA damage response and repair proteins"/>
</dbReference>
<dbReference type="Reactome" id="R-RNO-3232142">
    <property type="pathway name" value="SUMOylation of ubiquitinylation proteins"/>
</dbReference>
<dbReference type="Reactome" id="R-RNO-3301854">
    <property type="pathway name" value="Nuclear Pore Complex (NPC) Disassembly"/>
</dbReference>
<dbReference type="Reactome" id="R-RNO-3371453">
    <property type="pathway name" value="Regulation of HSF1-mediated heat shock response"/>
</dbReference>
<dbReference type="Reactome" id="R-RNO-4085377">
    <property type="pathway name" value="SUMOylation of SUMOylation proteins"/>
</dbReference>
<dbReference type="Reactome" id="R-RNO-4551638">
    <property type="pathway name" value="SUMOylation of chromatin organization proteins"/>
</dbReference>
<dbReference type="Reactome" id="R-RNO-4570464">
    <property type="pathway name" value="SUMOylation of RNA binding proteins"/>
</dbReference>
<dbReference type="Reactome" id="R-RNO-4615885">
    <property type="pathway name" value="SUMOylation of DNA replication proteins"/>
</dbReference>
<dbReference type="Reactome" id="R-RNO-5578749">
    <property type="pathway name" value="Transcriptional regulation by small RNAs"/>
</dbReference>
<dbReference type="PRO" id="PR:Q3SWS8"/>
<dbReference type="Proteomes" id="UP000002494">
    <property type="component" value="Chromosome 3"/>
</dbReference>
<dbReference type="Bgee" id="ENSRNOG00000021295">
    <property type="expression patterns" value="Expressed in thymus and 19 other cell types or tissues"/>
</dbReference>
<dbReference type="GO" id="GO:0005737">
    <property type="term" value="C:cytoplasm"/>
    <property type="evidence" value="ECO:0007669"/>
    <property type="project" value="UniProtKB-SubCell"/>
</dbReference>
<dbReference type="GO" id="GO:0001650">
    <property type="term" value="C:fibrillar center"/>
    <property type="evidence" value="ECO:0007669"/>
    <property type="project" value="Ensembl"/>
</dbReference>
<dbReference type="GO" id="GO:0097431">
    <property type="term" value="C:mitotic spindle pole"/>
    <property type="evidence" value="ECO:0000250"/>
    <property type="project" value="UniProtKB"/>
</dbReference>
<dbReference type="GO" id="GO:0005635">
    <property type="term" value="C:nuclear envelope"/>
    <property type="evidence" value="ECO:0000314"/>
    <property type="project" value="GO_Central"/>
</dbReference>
<dbReference type="GO" id="GO:0005643">
    <property type="term" value="C:nuclear pore"/>
    <property type="evidence" value="ECO:0000266"/>
    <property type="project" value="RGD"/>
</dbReference>
<dbReference type="GO" id="GO:0005654">
    <property type="term" value="C:nucleoplasm"/>
    <property type="evidence" value="ECO:0007669"/>
    <property type="project" value="Ensembl"/>
</dbReference>
<dbReference type="GO" id="GO:0003723">
    <property type="term" value="F:RNA binding"/>
    <property type="evidence" value="ECO:0000266"/>
    <property type="project" value="RGD"/>
</dbReference>
<dbReference type="GO" id="GO:0043130">
    <property type="term" value="F:ubiquitin binding"/>
    <property type="evidence" value="ECO:0000318"/>
    <property type="project" value="GO_Central"/>
</dbReference>
<dbReference type="GO" id="GO:0051301">
    <property type="term" value="P:cell division"/>
    <property type="evidence" value="ECO:0007669"/>
    <property type="project" value="UniProtKB-KW"/>
</dbReference>
<dbReference type="GO" id="GO:0060236">
    <property type="term" value="P:regulation of mitotic spindle organization"/>
    <property type="evidence" value="ECO:0000250"/>
    <property type="project" value="UniProtKB"/>
</dbReference>
<dbReference type="GO" id="GO:0006405">
    <property type="term" value="P:RNA export from nucleus"/>
    <property type="evidence" value="ECO:0000318"/>
    <property type="project" value="GO_Central"/>
</dbReference>
<dbReference type="GO" id="GO:0000972">
    <property type="term" value="P:transcription-dependent tethering of RNA polymerase II gene DNA at nuclear periphery"/>
    <property type="evidence" value="ECO:0000318"/>
    <property type="project" value="GO_Central"/>
</dbReference>
<dbReference type="FunFam" id="2.130.10.10:FF:000084">
    <property type="entry name" value="mRNA export factor"/>
    <property type="match status" value="1"/>
</dbReference>
<dbReference type="Gene3D" id="2.130.10.10">
    <property type="entry name" value="YVTN repeat-like/Quinoprotein amine dehydrogenase"/>
    <property type="match status" value="1"/>
</dbReference>
<dbReference type="InterPro" id="IPR020472">
    <property type="entry name" value="G-protein_beta_WD-40_rep"/>
</dbReference>
<dbReference type="InterPro" id="IPR015943">
    <property type="entry name" value="WD40/YVTN_repeat-like_dom_sf"/>
</dbReference>
<dbReference type="InterPro" id="IPR019775">
    <property type="entry name" value="WD40_repeat_CS"/>
</dbReference>
<dbReference type="InterPro" id="IPR036322">
    <property type="entry name" value="WD40_repeat_dom_sf"/>
</dbReference>
<dbReference type="InterPro" id="IPR001680">
    <property type="entry name" value="WD40_rpt"/>
</dbReference>
<dbReference type="PANTHER" id="PTHR10971">
    <property type="entry name" value="MRNA EXPORT FACTOR AND BUB3"/>
    <property type="match status" value="1"/>
</dbReference>
<dbReference type="Pfam" id="PF00400">
    <property type="entry name" value="WD40"/>
    <property type="match status" value="3"/>
</dbReference>
<dbReference type="PRINTS" id="PR00320">
    <property type="entry name" value="GPROTEINBRPT"/>
</dbReference>
<dbReference type="SMART" id="SM00320">
    <property type="entry name" value="WD40"/>
    <property type="match status" value="4"/>
</dbReference>
<dbReference type="SUPFAM" id="SSF50978">
    <property type="entry name" value="WD40 repeat-like"/>
    <property type="match status" value="1"/>
</dbReference>
<dbReference type="PROSITE" id="PS00678">
    <property type="entry name" value="WD_REPEATS_1"/>
    <property type="match status" value="2"/>
</dbReference>
<dbReference type="PROSITE" id="PS50082">
    <property type="entry name" value="WD_REPEATS_2"/>
    <property type="match status" value="3"/>
</dbReference>
<dbReference type="PROSITE" id="PS50294">
    <property type="entry name" value="WD_REPEATS_REGION"/>
    <property type="match status" value="1"/>
</dbReference>
<proteinExistence type="evidence at protein level"/>
<feature type="chain" id="PRO_0000237587" description="mRNA export factor">
    <location>
        <begin position="1"/>
        <end position="368"/>
    </location>
</feature>
<feature type="repeat" description="WD 1">
    <location>
        <begin position="37"/>
        <end position="79"/>
    </location>
</feature>
<feature type="repeat" description="WD 2">
    <location>
        <begin position="84"/>
        <end position="114"/>
    </location>
</feature>
<feature type="repeat" description="WD 3">
    <location>
        <begin position="125"/>
        <end position="157"/>
    </location>
</feature>
<feature type="repeat" description="WD 4">
    <location>
        <begin position="168"/>
        <end position="206"/>
    </location>
</feature>
<feature type="repeat" description="WD 5">
    <location>
        <begin position="215"/>
        <end position="255"/>
    </location>
</feature>
<feature type="repeat" description="WD 6">
    <location>
        <begin position="271"/>
        <end position="301"/>
    </location>
</feature>
<feature type="repeat" description="WD 7">
    <location>
        <begin position="310"/>
        <end position="346"/>
    </location>
</feature>
<feature type="region of interest" description="Disordered" evidence="2">
    <location>
        <begin position="15"/>
        <end position="34"/>
    </location>
</feature>
<feature type="modified residue" description="Phosphothreonine" evidence="1">
    <location>
        <position position="229"/>
    </location>
</feature>
<name>RAE1L_RAT</name>
<comment type="function">
    <text evidence="1">Plays a role in mitotic bipolar spindle formation. Binds mRNA. May function in nucleocytoplasmic transport and in directly or indirectly attaching cytoplasmic mRNPs to the cytoskeleton.</text>
</comment>
<comment type="subunit">
    <text evidence="1 3">Interacts with NUMA1 (via N-terminal end of the coiled-coil domain); this interaction promotes spindle formation in mitosis (By similarity). Interacts with NUP98 (By similarity). Interacts with MYCBP2 (PubMed:22357847). Interacts with USP11 (By similarity).</text>
</comment>
<comment type="interaction">
    <interactant intactId="EBI-6920222">
        <id>Q3SWS8</id>
    </interactant>
    <interactant intactId="EBI-1043774">
        <id>O75592</id>
        <label>MYCBP2</label>
    </interactant>
    <organismsDiffer>true</organismsDiffer>
    <experiments>2</experiments>
</comment>
<comment type="interaction">
    <interactant intactId="EBI-6920222">
        <id>Q3SWS8</id>
    </interactant>
    <interactant intactId="EBI-6920110">
        <id>Q17551</id>
        <label>rpm-1</label>
    </interactant>
    <organismsDiffer>true</organismsDiffer>
    <experiments>2</experiments>
</comment>
<comment type="subcellular location">
    <subcellularLocation>
        <location evidence="1">Cytoplasm</location>
    </subcellularLocation>
    <subcellularLocation>
        <location evidence="1">Nucleus</location>
    </subcellularLocation>
    <subcellularLocation>
        <location evidence="1">Cytoplasm</location>
        <location evidence="1">Cytoskeleton</location>
        <location evidence="1">Spindle pole</location>
    </subcellularLocation>
    <text evidence="1">Recruited from interphase nuclei to spindle MTs during mitosis.</text>
</comment>
<comment type="similarity">
    <text evidence="4">Belongs to the WD repeat rae1 family.</text>
</comment>
<sequence length="368" mass="40919">MSLFGTTSGFGTGGTSMFGSTTTDNHNPMKDIEVTSSPDDSIGCLSFSPPTLPGNFLIAGSWANDVRCWEVQDSGQTIPKAQQMHTGPVLDVCWSDDGSKVFTASCDKTAKMWDLNSNQAIQIAQHDAPVKTIHWIKAPNYSCVMTGSWDKTLKFWDTRSSNPMMVLQLPERCYCADVIYPMAVVATAERGLIVYQLENQPSEFRRIESPLKHQHRCVAIFKDKQNKPTGFALGSIEGRVAIHYINPPNPAKDNFTFKCHRSNGTNTSAPQDIYAVNGIAFHPVHGTLATVGSDGRFSFWDKDARTKLKTSEQLDQPVAACGFNHNGNIFAYASSYDWSKGHEFYNPQKKNYIFLRNAAEELKPRNKK</sequence>
<keyword id="KW-0131">Cell cycle</keyword>
<keyword id="KW-0132">Cell division</keyword>
<keyword id="KW-0963">Cytoplasm</keyword>
<keyword id="KW-0206">Cytoskeleton</keyword>
<keyword id="KW-0498">Mitosis</keyword>
<keyword id="KW-0539">Nucleus</keyword>
<keyword id="KW-0597">Phosphoprotein</keyword>
<keyword id="KW-1185">Reference proteome</keyword>
<keyword id="KW-0677">Repeat</keyword>
<keyword id="KW-0813">Transport</keyword>
<keyword id="KW-0853">WD repeat</keyword>